<organism>
    <name type="scientific">Oncopeltus fasciatus</name>
    <name type="common">Large milkweed bug</name>
    <dbReference type="NCBI Taxonomy" id="7536"/>
    <lineage>
        <taxon>Eukaryota</taxon>
        <taxon>Metazoa</taxon>
        <taxon>Ecdysozoa</taxon>
        <taxon>Arthropoda</taxon>
        <taxon>Hexapoda</taxon>
        <taxon>Insecta</taxon>
        <taxon>Pterygota</taxon>
        <taxon>Neoptera</taxon>
        <taxon>Paraneoptera</taxon>
        <taxon>Hemiptera</taxon>
        <taxon>Heteroptera</taxon>
        <taxon>Panheteroptera</taxon>
        <taxon>Pentatomomorpha</taxon>
        <taxon>Lygaeoidea</taxon>
        <taxon>Lygaeidae</taxon>
        <taxon>Lygaeinae</taxon>
        <taxon>Oncopeltus</taxon>
    </lineage>
</organism>
<reference key="1">
    <citation type="journal article" date="1992" name="Mol. Phylogenet. Evol.">
        <title>Evolution of the mitochondrial cytochrome oxidase II gene among 10 orders of insects.</title>
        <authorList>
            <person name="Liu H."/>
            <person name="Beckenbach A.T."/>
        </authorList>
    </citation>
    <scope>NUCLEOTIDE SEQUENCE [GENOMIC DNA]</scope>
</reference>
<gene>
    <name type="primary">COII</name>
</gene>
<name>COX2_ONCFA</name>
<sequence length="229" mass="26316">MATWMNINLQDANSSTMEQLTMFHDHTLMILTMITSIVTFIMVSMTTNTLINRYLLEGQTIEFIWTTIPAITLIFIALPSLHLLYLIDEINNPEMTLKVIGHQWYWSYEYSDFKNIEFDSYMKPTNELMNNEFRLLEVDNRVLLPMNKQIRILITAADVLHSWAIPSLGVKIDATPGRLNQGSIKINRPGILFGQCSEICGANHSFMPIVIESVPIKNFLKWINKSLSS</sequence>
<evidence type="ECO:0000250" key="1">
    <source>
        <dbReference type="UniProtKB" id="P00410"/>
    </source>
</evidence>
<evidence type="ECO:0000255" key="2"/>
<evidence type="ECO:0000305" key="3"/>
<keyword id="KW-0186">Copper</keyword>
<keyword id="KW-0249">Electron transport</keyword>
<keyword id="KW-0460">Magnesium</keyword>
<keyword id="KW-0472">Membrane</keyword>
<keyword id="KW-0479">Metal-binding</keyword>
<keyword id="KW-0496">Mitochondrion</keyword>
<keyword id="KW-0999">Mitochondrion inner membrane</keyword>
<keyword id="KW-0679">Respiratory chain</keyword>
<keyword id="KW-1278">Translocase</keyword>
<keyword id="KW-0812">Transmembrane</keyword>
<keyword id="KW-1133">Transmembrane helix</keyword>
<keyword id="KW-0813">Transport</keyword>
<accession>P29876</accession>
<proteinExistence type="inferred from homology"/>
<feature type="chain" id="PRO_0000183643" description="Cytochrome c oxidase subunit 2">
    <location>
        <begin position="1"/>
        <end position="229"/>
    </location>
</feature>
<feature type="topological domain" description="Mitochondrial intermembrane" evidence="2">
    <location>
        <begin position="1"/>
        <end position="26"/>
    </location>
</feature>
<feature type="transmembrane region" description="Helical" evidence="2">
    <location>
        <begin position="27"/>
        <end position="48"/>
    </location>
</feature>
<feature type="topological domain" description="Mitochondrial matrix" evidence="2">
    <location>
        <begin position="49"/>
        <end position="62"/>
    </location>
</feature>
<feature type="transmembrane region" description="Helical" evidence="2">
    <location>
        <begin position="63"/>
        <end position="82"/>
    </location>
</feature>
<feature type="topological domain" description="Mitochondrial intermembrane" evidence="2">
    <location>
        <begin position="83"/>
        <end position="229"/>
    </location>
</feature>
<feature type="binding site" evidence="1">
    <location>
        <position position="161"/>
    </location>
    <ligand>
        <name>Cu cation</name>
        <dbReference type="ChEBI" id="CHEBI:23378"/>
        <label>A1</label>
    </ligand>
</feature>
<feature type="binding site" evidence="1">
    <location>
        <position position="196"/>
    </location>
    <ligand>
        <name>Cu cation</name>
        <dbReference type="ChEBI" id="CHEBI:23378"/>
        <label>A1</label>
    </ligand>
</feature>
<feature type="binding site" evidence="1">
    <location>
        <position position="196"/>
    </location>
    <ligand>
        <name>Cu cation</name>
        <dbReference type="ChEBI" id="CHEBI:23378"/>
        <label>A2</label>
    </ligand>
</feature>
<feature type="binding site" evidence="1">
    <location>
        <position position="198"/>
    </location>
    <ligand>
        <name>Cu cation</name>
        <dbReference type="ChEBI" id="CHEBI:23378"/>
        <label>A2</label>
    </ligand>
</feature>
<feature type="binding site" evidence="1">
    <location>
        <position position="198"/>
    </location>
    <ligand>
        <name>Mg(2+)</name>
        <dbReference type="ChEBI" id="CHEBI:18420"/>
        <note>ligand shared with subunit 1</note>
    </ligand>
</feature>
<feature type="binding site" evidence="1">
    <location>
        <position position="200"/>
    </location>
    <ligand>
        <name>Cu cation</name>
        <dbReference type="ChEBI" id="CHEBI:23378"/>
        <label>A1</label>
    </ligand>
</feature>
<feature type="binding site" evidence="1">
    <location>
        <position position="200"/>
    </location>
    <ligand>
        <name>Cu cation</name>
        <dbReference type="ChEBI" id="CHEBI:23378"/>
        <label>A2</label>
    </ligand>
</feature>
<feature type="binding site" evidence="1">
    <location>
        <position position="204"/>
    </location>
    <ligand>
        <name>Cu cation</name>
        <dbReference type="ChEBI" id="CHEBI:23378"/>
        <label>A2</label>
    </ligand>
</feature>
<feature type="binding site" evidence="1">
    <location>
        <position position="207"/>
    </location>
    <ligand>
        <name>Cu cation</name>
        <dbReference type="ChEBI" id="CHEBI:23378"/>
        <label>A1</label>
    </ligand>
</feature>
<geneLocation type="mitochondrion"/>
<comment type="function">
    <text evidence="1">Component of the cytochrome c oxidase, the last enzyme in the mitochondrial electron transport chain which drives oxidative phosphorylation. The respiratory chain contains 3 multisubunit complexes succinate dehydrogenase (complex II, CII), ubiquinol-cytochrome c oxidoreductase (cytochrome b-c1 complex, complex III, CIII) and cytochrome c oxidase (complex IV, CIV), that cooperate to transfer electrons derived from NADH and succinate to molecular oxygen, creating an electrochemical gradient over the inner membrane that drives transmembrane transport and the ATP synthase. Cytochrome c oxidase is the component of the respiratory chain that catalyzes the reduction of oxygen to water. Electrons originating from reduced cytochrome c in the intermembrane space (IMS) are transferred via the dinuclear copper A center (CU(A)) of subunit 2 and heme A of subunit 1 to the active site in subunit 1, a binuclear center (BNC) formed by heme A3 and copper B (CU(B)). The BNC reduces molecular oxygen to 2 water molecules using 4 electrons from cytochrome c in the IMS and 4 protons from the mitochondrial matrix.</text>
</comment>
<comment type="catalytic activity">
    <reaction evidence="1">
        <text>4 Fe(II)-[cytochrome c] + O2 + 8 H(+)(in) = 4 Fe(III)-[cytochrome c] + 2 H2O + 4 H(+)(out)</text>
        <dbReference type="Rhea" id="RHEA:11436"/>
        <dbReference type="Rhea" id="RHEA-COMP:10350"/>
        <dbReference type="Rhea" id="RHEA-COMP:14399"/>
        <dbReference type="ChEBI" id="CHEBI:15377"/>
        <dbReference type="ChEBI" id="CHEBI:15378"/>
        <dbReference type="ChEBI" id="CHEBI:15379"/>
        <dbReference type="ChEBI" id="CHEBI:29033"/>
        <dbReference type="ChEBI" id="CHEBI:29034"/>
        <dbReference type="EC" id="7.1.1.9"/>
    </reaction>
    <physiologicalReaction direction="left-to-right" evidence="1">
        <dbReference type="Rhea" id="RHEA:11437"/>
    </physiologicalReaction>
</comment>
<comment type="cofactor">
    <cofactor evidence="1">
        <name>Cu cation</name>
        <dbReference type="ChEBI" id="CHEBI:23378"/>
    </cofactor>
    <text evidence="1">Binds a dinuclear copper A center per subunit.</text>
</comment>
<comment type="subunit">
    <text evidence="1">Component of the cytochrome c oxidase (complex IV, CIV), a multisubunit enzyme composed of a catalytic core of 3 subunits and several supernumerary subunits. The complex exists as a monomer or a dimer and forms supercomplexes (SCs) in the inner mitochondrial membrane with ubiquinol-cytochrome c oxidoreductase (cytochrome b-c1 complex, complex III, CIII).</text>
</comment>
<comment type="subcellular location">
    <subcellularLocation>
        <location evidence="1">Mitochondrion inner membrane</location>
        <topology evidence="1">Multi-pass membrane protein</topology>
    </subcellularLocation>
</comment>
<comment type="similarity">
    <text evidence="3">Belongs to the cytochrome c oxidase subunit 2 family.</text>
</comment>
<protein>
    <recommendedName>
        <fullName>Cytochrome c oxidase subunit 2</fullName>
        <ecNumber>7.1.1.9</ecNumber>
    </recommendedName>
    <alternativeName>
        <fullName>Cytochrome c oxidase polypeptide II</fullName>
    </alternativeName>
</protein>
<dbReference type="EC" id="7.1.1.9"/>
<dbReference type="EMBL" id="M83959">
    <property type="protein sequence ID" value="AAA31983.2"/>
    <property type="molecule type" value="Genomic_DNA"/>
</dbReference>
<dbReference type="PIR" id="H45170">
    <property type="entry name" value="H45170"/>
</dbReference>
<dbReference type="SMR" id="P29876"/>
<dbReference type="GO" id="GO:0005743">
    <property type="term" value="C:mitochondrial inner membrane"/>
    <property type="evidence" value="ECO:0007669"/>
    <property type="project" value="UniProtKB-SubCell"/>
</dbReference>
<dbReference type="GO" id="GO:0005507">
    <property type="term" value="F:copper ion binding"/>
    <property type="evidence" value="ECO:0007669"/>
    <property type="project" value="InterPro"/>
</dbReference>
<dbReference type="GO" id="GO:0004129">
    <property type="term" value="F:cytochrome-c oxidase activity"/>
    <property type="evidence" value="ECO:0007669"/>
    <property type="project" value="UniProtKB-EC"/>
</dbReference>
<dbReference type="GO" id="GO:0042773">
    <property type="term" value="P:ATP synthesis coupled electron transport"/>
    <property type="evidence" value="ECO:0007669"/>
    <property type="project" value="TreeGrafter"/>
</dbReference>
<dbReference type="CDD" id="cd13912">
    <property type="entry name" value="CcO_II_C"/>
    <property type="match status" value="1"/>
</dbReference>
<dbReference type="FunFam" id="2.60.40.420:FF:000001">
    <property type="entry name" value="Cytochrome c oxidase subunit 2"/>
    <property type="match status" value="1"/>
</dbReference>
<dbReference type="Gene3D" id="1.10.287.90">
    <property type="match status" value="1"/>
</dbReference>
<dbReference type="Gene3D" id="2.60.40.420">
    <property type="entry name" value="Cupredoxins - blue copper proteins"/>
    <property type="match status" value="1"/>
</dbReference>
<dbReference type="InterPro" id="IPR045187">
    <property type="entry name" value="CcO_II"/>
</dbReference>
<dbReference type="InterPro" id="IPR002429">
    <property type="entry name" value="CcO_II-like_C"/>
</dbReference>
<dbReference type="InterPro" id="IPR034210">
    <property type="entry name" value="CcO_II_C"/>
</dbReference>
<dbReference type="InterPro" id="IPR001505">
    <property type="entry name" value="Copper_CuA"/>
</dbReference>
<dbReference type="InterPro" id="IPR008972">
    <property type="entry name" value="Cupredoxin"/>
</dbReference>
<dbReference type="InterPro" id="IPR014222">
    <property type="entry name" value="Cyt_c_oxidase_su2"/>
</dbReference>
<dbReference type="InterPro" id="IPR011759">
    <property type="entry name" value="Cyt_c_oxidase_su2_TM_dom"/>
</dbReference>
<dbReference type="InterPro" id="IPR036257">
    <property type="entry name" value="Cyt_c_oxidase_su2_TM_sf"/>
</dbReference>
<dbReference type="NCBIfam" id="TIGR02866">
    <property type="entry name" value="CoxB"/>
    <property type="match status" value="1"/>
</dbReference>
<dbReference type="PANTHER" id="PTHR22888:SF9">
    <property type="entry name" value="CYTOCHROME C OXIDASE SUBUNIT 2"/>
    <property type="match status" value="1"/>
</dbReference>
<dbReference type="PANTHER" id="PTHR22888">
    <property type="entry name" value="CYTOCHROME C OXIDASE, SUBUNIT II"/>
    <property type="match status" value="1"/>
</dbReference>
<dbReference type="Pfam" id="PF00116">
    <property type="entry name" value="COX2"/>
    <property type="match status" value="1"/>
</dbReference>
<dbReference type="Pfam" id="PF02790">
    <property type="entry name" value="COX2_TM"/>
    <property type="match status" value="1"/>
</dbReference>
<dbReference type="PRINTS" id="PR01166">
    <property type="entry name" value="CYCOXIDASEII"/>
</dbReference>
<dbReference type="SUPFAM" id="SSF49503">
    <property type="entry name" value="Cupredoxins"/>
    <property type="match status" value="1"/>
</dbReference>
<dbReference type="SUPFAM" id="SSF81464">
    <property type="entry name" value="Cytochrome c oxidase subunit II-like, transmembrane region"/>
    <property type="match status" value="1"/>
</dbReference>
<dbReference type="PROSITE" id="PS00078">
    <property type="entry name" value="COX2"/>
    <property type="match status" value="1"/>
</dbReference>
<dbReference type="PROSITE" id="PS50857">
    <property type="entry name" value="COX2_CUA"/>
    <property type="match status" value="1"/>
</dbReference>
<dbReference type="PROSITE" id="PS50999">
    <property type="entry name" value="COX2_TM"/>
    <property type="match status" value="1"/>
</dbReference>